<protein>
    <recommendedName>
        <fullName evidence="2">Dolichyl-diphosphooligosaccharide--protein glycosyltransferase subunit 1</fullName>
    </recommendedName>
    <alternativeName>
        <fullName>Dolichyl-diphosphooligosaccharide--protein glycosyltransferase 65 kDa subunit</fullName>
    </alternativeName>
    <alternativeName>
        <fullName>Oligosaccharyl transferase 65-I kDa subunit</fullName>
    </alternativeName>
    <alternativeName>
        <fullName>Ribophorin I</fullName>
        <shortName>RPN-I</shortName>
    </alternativeName>
    <alternativeName>
        <fullName>Ribophorin-1</fullName>
    </alternativeName>
</protein>
<reference key="1">
    <citation type="journal article" date="1994" name="J. Biol. Chem.">
        <title>Purification and characterization of avian oligosaccharyltransferase. Complete amino acid sequence of the 50-kDa subunit.</title>
        <authorList>
            <person name="Kumar V."/>
            <person name="Heinemann F.S."/>
            <person name="Ozols J."/>
        </authorList>
    </citation>
    <scope>PROTEIN SEQUENCE</scope>
    <source>
        <tissue>Oviduct</tissue>
    </source>
</reference>
<feature type="chain" id="PRO_0000058091" description="Dolichyl-diphosphooligosaccharide--protein glycosyltransferase subunit 1">
    <location>
        <begin position="1" status="less than"/>
        <end position="28" status="greater than"/>
    </location>
</feature>
<feature type="non-consecutive residues" evidence="4">
    <location>
        <begin position="10"/>
        <end position="11"/>
    </location>
</feature>
<feature type="non-terminal residue">
    <location>
        <position position="1"/>
    </location>
</feature>
<feature type="non-terminal residue">
    <location>
        <position position="28"/>
    </location>
</feature>
<gene>
    <name evidence="2" type="primary">RPN1</name>
</gene>
<comment type="function">
    <text evidence="3">Subunit of the oligosaccharyl transferase (OST) complex that catalyzes the initial transfer of a defined glycan (Glc(3)Man(9)GlcNAc(2) in eukaryotes) from the lipid carrier dolichol-pyrophosphate to an asparagine residue within an Asn-X-Ser/Thr consensus motif in nascent polypeptide chains, the first step in protein N-glycosylation. N-glycosylation occurs cotranslationally and the complex associates with the Sec61 complex at the channel-forming translocon complex that mediates protein translocation across the endoplasmic reticulum (ER). All subunits are required for a maximal enzyme activity.</text>
</comment>
<comment type="pathway">
    <text evidence="2">Protein modification; protein glycosylation.</text>
</comment>
<comment type="subunit">
    <text evidence="1">Component of the oligosaccharyltransferase (OST) complex.</text>
</comment>
<comment type="subcellular location">
    <subcellularLocation>
        <location evidence="1">Endoplasmic reticulum membrane</location>
        <topology evidence="1">Single-pass type I membrane protein</topology>
    </subcellularLocation>
</comment>
<comment type="similarity">
    <text evidence="4">Belongs to the OST1 family.</text>
</comment>
<organism>
    <name type="scientific">Gallus gallus</name>
    <name type="common">Chicken</name>
    <dbReference type="NCBI Taxonomy" id="9031"/>
    <lineage>
        <taxon>Eukaryota</taxon>
        <taxon>Metazoa</taxon>
        <taxon>Chordata</taxon>
        <taxon>Craniata</taxon>
        <taxon>Vertebrata</taxon>
        <taxon>Euteleostomi</taxon>
        <taxon>Archelosauria</taxon>
        <taxon>Archosauria</taxon>
        <taxon>Dinosauria</taxon>
        <taxon>Saurischia</taxon>
        <taxon>Theropoda</taxon>
        <taxon>Coelurosauria</taxon>
        <taxon>Aves</taxon>
        <taxon>Neognathae</taxon>
        <taxon>Galloanserae</taxon>
        <taxon>Galliformes</taxon>
        <taxon>Phasianidae</taxon>
        <taxon>Phasianinae</taxon>
        <taxon>Gallus</taxon>
    </lineage>
</organism>
<dbReference type="PIR" id="B54127">
    <property type="entry name" value="B54127"/>
</dbReference>
<dbReference type="FunCoup" id="P80896">
    <property type="interactions" value="2836"/>
</dbReference>
<dbReference type="STRING" id="9031.ENSGALP00000009487"/>
<dbReference type="InParanoid" id="P80896"/>
<dbReference type="OrthoDB" id="310030at2759"/>
<dbReference type="UniPathway" id="UPA00378"/>
<dbReference type="Proteomes" id="UP000000539">
    <property type="component" value="Unassembled WGS sequence"/>
</dbReference>
<dbReference type="GO" id="GO:0005789">
    <property type="term" value="C:endoplasmic reticulum membrane"/>
    <property type="evidence" value="ECO:0007669"/>
    <property type="project" value="UniProtKB-SubCell"/>
</dbReference>
<dbReference type="GO" id="GO:0006486">
    <property type="term" value="P:protein glycosylation"/>
    <property type="evidence" value="ECO:0007669"/>
    <property type="project" value="UniProtKB-UniPathway"/>
</dbReference>
<proteinExistence type="evidence at protein level"/>
<name>RPN1_CHICK</name>
<keyword id="KW-0903">Direct protein sequencing</keyword>
<keyword id="KW-0256">Endoplasmic reticulum</keyword>
<keyword id="KW-0472">Membrane</keyword>
<keyword id="KW-1185">Reference proteome</keyword>
<keyword id="KW-0812">Transmembrane</keyword>
<evidence type="ECO:0000250" key="1">
    <source>
        <dbReference type="UniProtKB" id="E2RQ08"/>
    </source>
</evidence>
<evidence type="ECO:0000250" key="2">
    <source>
        <dbReference type="UniProtKB" id="P04843"/>
    </source>
</evidence>
<evidence type="ECO:0000250" key="3">
    <source>
        <dbReference type="UniProtKB" id="P41543"/>
    </source>
</evidence>
<evidence type="ECO:0000305" key="4"/>
<accession>P80896</accession>
<sequence length="28" mass="3349">VFTHVLQPYPEIRPRFPLVGGWKTHYXV</sequence>